<evidence type="ECO:0000255" key="1">
    <source>
        <dbReference type="HAMAP-Rule" id="MF_00483"/>
    </source>
</evidence>
<comment type="function">
    <text evidence="1">Trans-acting protein required for termination of DNA replication. Binds to DNA replication terminator sequences (terA to terF) to prevent the passage of replication forks. The termination efficiency will be affected by the affinity of this protein for the terminator sequence.</text>
</comment>
<comment type="subcellular location">
    <subcellularLocation>
        <location evidence="1">Cytoplasm</location>
    </subcellularLocation>
</comment>
<comment type="similarity">
    <text evidence="1">Belongs to the Tus family.</text>
</comment>
<sequence length="309" mass="35840">MARYDLVDRLNTTFRQMEQELAAFAAHLEQHKLLVARVFSLPEVKKEDEHNPLNRIEVKQHLGNDAQSLALRHFRHLFIQQQSENRSSKAAVRLPGVLCYQVDNLSQAALVSHIQHINKLKTTFEHIVTVESELPTAARFEWVHRHLPGLITLNAYRTLTVLHDPATLRFGWANKHIIKNLHRDEVLAQLEKSLKSPRSVAPWTREEWQRKLEREYQDIAALPQNAKLKIKRPVKVQPIARVWYKGDQKQVQHACPTPLIALINRDNGARVPDVGELLNYDADNVQHRYKPQAQPLRLIIPRLHLYVAD</sequence>
<keyword id="KW-0963">Cytoplasm</keyword>
<keyword id="KW-0235">DNA replication</keyword>
<keyword id="KW-0238">DNA-binding</keyword>
<proteinExistence type="inferred from homology"/>
<reference key="1">
    <citation type="journal article" date="2009" name="PLoS Genet.">
        <title>Organised genome dynamics in the Escherichia coli species results in highly diverse adaptive paths.</title>
        <authorList>
            <person name="Touchon M."/>
            <person name="Hoede C."/>
            <person name="Tenaillon O."/>
            <person name="Barbe V."/>
            <person name="Baeriswyl S."/>
            <person name="Bidet P."/>
            <person name="Bingen E."/>
            <person name="Bonacorsi S."/>
            <person name="Bouchier C."/>
            <person name="Bouvet O."/>
            <person name="Calteau A."/>
            <person name="Chiapello H."/>
            <person name="Clermont O."/>
            <person name="Cruveiller S."/>
            <person name="Danchin A."/>
            <person name="Diard M."/>
            <person name="Dossat C."/>
            <person name="Karoui M.E."/>
            <person name="Frapy E."/>
            <person name="Garry L."/>
            <person name="Ghigo J.M."/>
            <person name="Gilles A.M."/>
            <person name="Johnson J."/>
            <person name="Le Bouguenec C."/>
            <person name="Lescat M."/>
            <person name="Mangenot S."/>
            <person name="Martinez-Jehanne V."/>
            <person name="Matic I."/>
            <person name="Nassif X."/>
            <person name="Oztas S."/>
            <person name="Petit M.A."/>
            <person name="Pichon C."/>
            <person name="Rouy Z."/>
            <person name="Ruf C.S."/>
            <person name="Schneider D."/>
            <person name="Tourret J."/>
            <person name="Vacherie B."/>
            <person name="Vallenet D."/>
            <person name="Medigue C."/>
            <person name="Rocha E.P.C."/>
            <person name="Denamur E."/>
        </authorList>
    </citation>
    <scope>NUCLEOTIDE SEQUENCE [LARGE SCALE GENOMIC DNA]</scope>
    <source>
        <strain>IAI1</strain>
    </source>
</reference>
<accession>B7M0G6</accession>
<dbReference type="EMBL" id="CU928160">
    <property type="protein sequence ID" value="CAQ98518.1"/>
    <property type="molecule type" value="Genomic_DNA"/>
</dbReference>
<dbReference type="RefSeq" id="WP_000135179.1">
    <property type="nucleotide sequence ID" value="NC_011741.1"/>
</dbReference>
<dbReference type="SMR" id="B7M0G6"/>
<dbReference type="KEGG" id="ecr:ECIAI1_1661"/>
<dbReference type="HOGENOM" id="CLU_078181_0_0_6"/>
<dbReference type="GO" id="GO:0005737">
    <property type="term" value="C:cytoplasm"/>
    <property type="evidence" value="ECO:0007669"/>
    <property type="project" value="UniProtKB-SubCell"/>
</dbReference>
<dbReference type="GO" id="GO:0003677">
    <property type="term" value="F:DNA binding"/>
    <property type="evidence" value="ECO:0007669"/>
    <property type="project" value="UniProtKB-UniRule"/>
</dbReference>
<dbReference type="GO" id="GO:0006274">
    <property type="term" value="P:DNA replication termination"/>
    <property type="evidence" value="ECO:0007669"/>
    <property type="project" value="UniProtKB-UniRule"/>
</dbReference>
<dbReference type="Gene3D" id="3.30.54.10">
    <property type="match status" value="1"/>
</dbReference>
<dbReference type="Gene3D" id="3.50.14.10">
    <property type="entry name" value="Replication terminator Tus, domain 1 superfamily/Replication terminator Tus"/>
    <property type="match status" value="1"/>
</dbReference>
<dbReference type="HAMAP" id="MF_00483">
    <property type="entry name" value="Rep_term_Tus"/>
    <property type="match status" value="1"/>
</dbReference>
<dbReference type="InterPro" id="IPR008865">
    <property type="entry name" value="DNA_replication_term_site-bd"/>
</dbReference>
<dbReference type="InterPro" id="IPR036381">
    <property type="entry name" value="Tus_dom1"/>
</dbReference>
<dbReference type="InterPro" id="IPR036384">
    <property type="entry name" value="Tus_sf"/>
</dbReference>
<dbReference type="NCBIfam" id="TIGR02648">
    <property type="entry name" value="rep_term_tus"/>
    <property type="match status" value="1"/>
</dbReference>
<dbReference type="Pfam" id="PF05472">
    <property type="entry name" value="Ter"/>
    <property type="match status" value="1"/>
</dbReference>
<dbReference type="SUPFAM" id="SSF56596">
    <property type="entry name" value="Replication terminator protein (Tus)"/>
    <property type="match status" value="1"/>
</dbReference>
<protein>
    <recommendedName>
        <fullName evidence="1">DNA replication terminus site-binding protein</fullName>
        <shortName evidence="1">Ter-binding protein</shortName>
    </recommendedName>
</protein>
<organism>
    <name type="scientific">Escherichia coli O8 (strain IAI1)</name>
    <dbReference type="NCBI Taxonomy" id="585034"/>
    <lineage>
        <taxon>Bacteria</taxon>
        <taxon>Pseudomonadati</taxon>
        <taxon>Pseudomonadota</taxon>
        <taxon>Gammaproteobacteria</taxon>
        <taxon>Enterobacterales</taxon>
        <taxon>Enterobacteriaceae</taxon>
        <taxon>Escherichia</taxon>
    </lineage>
</organism>
<feature type="chain" id="PRO_1000126036" description="DNA replication terminus site-binding protein">
    <location>
        <begin position="1"/>
        <end position="309"/>
    </location>
</feature>
<gene>
    <name evidence="1" type="primary">tus</name>
    <name type="ordered locus">ECIAI1_1661</name>
</gene>
<name>TUS_ECO8A</name>